<dbReference type="EMBL" id="L43967">
    <property type="protein sequence ID" value="AAC71556.1"/>
    <property type="molecule type" value="Genomic_DNA"/>
</dbReference>
<dbReference type="PIR" id="G64236">
    <property type="entry name" value="G64236"/>
</dbReference>
<dbReference type="RefSeq" id="WP_009885985.1">
    <property type="nucleotide sequence ID" value="NC_000908.2"/>
</dbReference>
<dbReference type="SMR" id="P47574"/>
<dbReference type="FunCoup" id="P47574">
    <property type="interactions" value="174"/>
</dbReference>
<dbReference type="STRING" id="243273.MG_332"/>
<dbReference type="GeneID" id="88282505"/>
<dbReference type="KEGG" id="mge:MG_332"/>
<dbReference type="eggNOG" id="COG0217">
    <property type="taxonomic scope" value="Bacteria"/>
</dbReference>
<dbReference type="HOGENOM" id="CLU_062974_2_2_14"/>
<dbReference type="InParanoid" id="P47574"/>
<dbReference type="OrthoDB" id="9781053at2"/>
<dbReference type="BioCyc" id="MGEN243273:G1GJ2-414-MONOMER"/>
<dbReference type="Proteomes" id="UP000000807">
    <property type="component" value="Chromosome"/>
</dbReference>
<dbReference type="GO" id="GO:0005829">
    <property type="term" value="C:cytosol"/>
    <property type="evidence" value="ECO:0000318"/>
    <property type="project" value="GO_Central"/>
</dbReference>
<dbReference type="GO" id="GO:0003677">
    <property type="term" value="F:DNA binding"/>
    <property type="evidence" value="ECO:0007669"/>
    <property type="project" value="UniProtKB-UniRule"/>
</dbReference>
<dbReference type="GO" id="GO:0006355">
    <property type="term" value="P:regulation of DNA-templated transcription"/>
    <property type="evidence" value="ECO:0007669"/>
    <property type="project" value="UniProtKB-UniRule"/>
</dbReference>
<dbReference type="FunFam" id="1.10.10.200:FF:000004">
    <property type="entry name" value="Probable transcriptional regulatory protein BSBG_02618"/>
    <property type="match status" value="1"/>
</dbReference>
<dbReference type="Gene3D" id="1.10.10.200">
    <property type="match status" value="1"/>
</dbReference>
<dbReference type="Gene3D" id="3.30.70.980">
    <property type="match status" value="2"/>
</dbReference>
<dbReference type="HAMAP" id="MF_00693">
    <property type="entry name" value="Transcrip_reg_TACO1"/>
    <property type="match status" value="1"/>
</dbReference>
<dbReference type="InterPro" id="IPR017856">
    <property type="entry name" value="Integrase-like_N"/>
</dbReference>
<dbReference type="InterPro" id="IPR048300">
    <property type="entry name" value="TACO1_YebC-like_2nd/3rd_dom"/>
</dbReference>
<dbReference type="InterPro" id="IPR049083">
    <property type="entry name" value="TACO1_YebC_N"/>
</dbReference>
<dbReference type="InterPro" id="IPR002876">
    <property type="entry name" value="Transcrip_reg_TACO1-like"/>
</dbReference>
<dbReference type="InterPro" id="IPR026564">
    <property type="entry name" value="Transcrip_reg_TACO1-like_dom3"/>
</dbReference>
<dbReference type="InterPro" id="IPR029072">
    <property type="entry name" value="YebC-like"/>
</dbReference>
<dbReference type="NCBIfam" id="NF009044">
    <property type="entry name" value="PRK12378.1"/>
    <property type="match status" value="1"/>
</dbReference>
<dbReference type="NCBIfam" id="TIGR01033">
    <property type="entry name" value="YebC/PmpR family DNA-binding transcriptional regulator"/>
    <property type="match status" value="1"/>
</dbReference>
<dbReference type="PANTHER" id="PTHR12532:SF6">
    <property type="entry name" value="TRANSCRIPTIONAL REGULATORY PROTEIN YEBC-RELATED"/>
    <property type="match status" value="1"/>
</dbReference>
<dbReference type="PANTHER" id="PTHR12532">
    <property type="entry name" value="TRANSLATIONAL ACTIVATOR OF CYTOCHROME C OXIDASE 1"/>
    <property type="match status" value="1"/>
</dbReference>
<dbReference type="Pfam" id="PF20772">
    <property type="entry name" value="TACO1_YebC_N"/>
    <property type="match status" value="1"/>
</dbReference>
<dbReference type="Pfam" id="PF01709">
    <property type="entry name" value="Transcrip_reg"/>
    <property type="match status" value="1"/>
</dbReference>
<dbReference type="SUPFAM" id="SSF75625">
    <property type="entry name" value="YebC-like"/>
    <property type="match status" value="1"/>
</dbReference>
<gene>
    <name type="ordered locus">MG332</name>
</gene>
<name>Y332_MYCGE</name>
<accession>P47574</accession>
<protein>
    <recommendedName>
        <fullName evidence="1">Probable transcriptional regulatory protein MG332</fullName>
    </recommendedName>
</protein>
<organism>
    <name type="scientific">Mycoplasma genitalium (strain ATCC 33530 / DSM 19775 / NCTC 10195 / G37)</name>
    <name type="common">Mycoplasmoides genitalium</name>
    <dbReference type="NCBI Taxonomy" id="243273"/>
    <lineage>
        <taxon>Bacteria</taxon>
        <taxon>Bacillati</taxon>
        <taxon>Mycoplasmatota</taxon>
        <taxon>Mycoplasmoidales</taxon>
        <taxon>Mycoplasmoidaceae</taxon>
        <taxon>Mycoplasmoides</taxon>
    </lineage>
</organism>
<keyword id="KW-0963">Cytoplasm</keyword>
<keyword id="KW-0238">DNA-binding</keyword>
<keyword id="KW-1185">Reference proteome</keyword>
<keyword id="KW-0804">Transcription</keyword>
<keyword id="KW-0805">Transcription regulation</keyword>
<proteinExistence type="inferred from homology"/>
<evidence type="ECO:0000255" key="1">
    <source>
        <dbReference type="HAMAP-Rule" id="MF_00693"/>
    </source>
</evidence>
<comment type="subcellular location">
    <subcellularLocation>
        <location evidence="1">Cytoplasm</location>
    </subcellularLocation>
</comment>
<comment type="similarity">
    <text evidence="1">Belongs to the TACO1 family.</text>
</comment>
<feature type="chain" id="PRO_0000175845" description="Probable transcriptional regulatory protein MG332">
    <location>
        <begin position="1"/>
        <end position="239"/>
    </location>
</feature>
<sequence length="239" mass="26964">MPRKHLIANQTNKKQQTSAKQLQKLAKRIASAVKKGGTNIQSNPHLKVAVDLALAKGLSMDSIKRNIHGSEKDTTKISEFCYEIFGPNGVGIIVFGLTDNPNRLLSSLNGYLAKLKGQLAKPNSVKINFQEEGIIFVNKNNYLKDDLIELLILDNINLIDVDYDEECFEISLHSNSYFHAKELLKKNNFSIVDSEIKLVPLLTVDLDRNQQTLLSRFLNACEEDDDIQFVVHNANPWEE</sequence>
<reference key="1">
    <citation type="journal article" date="1995" name="Science">
        <title>The minimal gene complement of Mycoplasma genitalium.</title>
        <authorList>
            <person name="Fraser C.M."/>
            <person name="Gocayne J.D."/>
            <person name="White O."/>
            <person name="Adams M.D."/>
            <person name="Clayton R.A."/>
            <person name="Fleischmann R.D."/>
            <person name="Bult C.J."/>
            <person name="Kerlavage A.R."/>
            <person name="Sutton G.G."/>
            <person name="Kelley J.M."/>
            <person name="Fritchman J.L."/>
            <person name="Weidman J.F."/>
            <person name="Small K.V."/>
            <person name="Sandusky M."/>
            <person name="Fuhrmann J.L."/>
            <person name="Nguyen D.T."/>
            <person name="Utterback T.R."/>
            <person name="Saudek D.M."/>
            <person name="Phillips C.A."/>
            <person name="Merrick J.M."/>
            <person name="Tomb J.-F."/>
            <person name="Dougherty B.A."/>
            <person name="Bott K.F."/>
            <person name="Hu P.-C."/>
            <person name="Lucier T.S."/>
            <person name="Peterson S.N."/>
            <person name="Smith H.O."/>
            <person name="Hutchison C.A. III"/>
            <person name="Venter J.C."/>
        </authorList>
    </citation>
    <scope>NUCLEOTIDE SEQUENCE [LARGE SCALE GENOMIC DNA]</scope>
    <source>
        <strain>ATCC 33530 / DSM 19775 / NCTC 10195 / G37</strain>
    </source>
</reference>